<dbReference type="EC" id="7.1.1.-" evidence="1"/>
<dbReference type="EMBL" id="CP000284">
    <property type="protein sequence ID" value="ABE50320.1"/>
    <property type="molecule type" value="Genomic_DNA"/>
</dbReference>
<dbReference type="RefSeq" id="WP_011480274.1">
    <property type="nucleotide sequence ID" value="NC_007947.1"/>
</dbReference>
<dbReference type="SMR" id="Q1GZL7"/>
<dbReference type="STRING" id="265072.Mfla_2053"/>
<dbReference type="KEGG" id="mfa:Mfla_2053"/>
<dbReference type="eggNOG" id="COG1143">
    <property type="taxonomic scope" value="Bacteria"/>
</dbReference>
<dbReference type="HOGENOM" id="CLU_067218_5_1_4"/>
<dbReference type="OrthoDB" id="9808559at2"/>
<dbReference type="Proteomes" id="UP000002440">
    <property type="component" value="Chromosome"/>
</dbReference>
<dbReference type="GO" id="GO:0005886">
    <property type="term" value="C:plasma membrane"/>
    <property type="evidence" value="ECO:0007669"/>
    <property type="project" value="UniProtKB-SubCell"/>
</dbReference>
<dbReference type="GO" id="GO:0051539">
    <property type="term" value="F:4 iron, 4 sulfur cluster binding"/>
    <property type="evidence" value="ECO:0007669"/>
    <property type="project" value="UniProtKB-KW"/>
</dbReference>
<dbReference type="GO" id="GO:0005506">
    <property type="term" value="F:iron ion binding"/>
    <property type="evidence" value="ECO:0007669"/>
    <property type="project" value="UniProtKB-UniRule"/>
</dbReference>
<dbReference type="GO" id="GO:0050136">
    <property type="term" value="F:NADH:ubiquinone reductase (non-electrogenic) activity"/>
    <property type="evidence" value="ECO:0007669"/>
    <property type="project" value="UniProtKB-UniRule"/>
</dbReference>
<dbReference type="GO" id="GO:0048038">
    <property type="term" value="F:quinone binding"/>
    <property type="evidence" value="ECO:0007669"/>
    <property type="project" value="UniProtKB-KW"/>
</dbReference>
<dbReference type="GO" id="GO:0009060">
    <property type="term" value="P:aerobic respiration"/>
    <property type="evidence" value="ECO:0007669"/>
    <property type="project" value="TreeGrafter"/>
</dbReference>
<dbReference type="FunFam" id="3.30.70.3270:FF:000003">
    <property type="entry name" value="NADH-quinone oxidoreductase subunit I"/>
    <property type="match status" value="1"/>
</dbReference>
<dbReference type="Gene3D" id="3.30.70.3270">
    <property type="match status" value="1"/>
</dbReference>
<dbReference type="HAMAP" id="MF_01351">
    <property type="entry name" value="NDH1_NuoI"/>
    <property type="match status" value="1"/>
</dbReference>
<dbReference type="InterPro" id="IPR017896">
    <property type="entry name" value="4Fe4S_Fe-S-bd"/>
</dbReference>
<dbReference type="InterPro" id="IPR017900">
    <property type="entry name" value="4Fe4S_Fe_S_CS"/>
</dbReference>
<dbReference type="InterPro" id="IPR010226">
    <property type="entry name" value="NADH_quinone_OxRdtase_chainI"/>
</dbReference>
<dbReference type="NCBIfam" id="TIGR01971">
    <property type="entry name" value="NuoI"/>
    <property type="match status" value="1"/>
</dbReference>
<dbReference type="NCBIfam" id="NF004538">
    <property type="entry name" value="PRK05888.1-4"/>
    <property type="match status" value="1"/>
</dbReference>
<dbReference type="NCBIfam" id="NF004539">
    <property type="entry name" value="PRK05888.1-5"/>
    <property type="match status" value="1"/>
</dbReference>
<dbReference type="PANTHER" id="PTHR10849:SF20">
    <property type="entry name" value="NADH DEHYDROGENASE [UBIQUINONE] IRON-SULFUR PROTEIN 8, MITOCHONDRIAL"/>
    <property type="match status" value="1"/>
</dbReference>
<dbReference type="PANTHER" id="PTHR10849">
    <property type="entry name" value="NADH DEHYDROGENASE UBIQUINONE IRON-SULFUR PROTEIN 8, MITOCHONDRIAL"/>
    <property type="match status" value="1"/>
</dbReference>
<dbReference type="Pfam" id="PF12838">
    <property type="entry name" value="Fer4_7"/>
    <property type="match status" value="1"/>
</dbReference>
<dbReference type="SUPFAM" id="SSF54862">
    <property type="entry name" value="4Fe-4S ferredoxins"/>
    <property type="match status" value="1"/>
</dbReference>
<dbReference type="PROSITE" id="PS00198">
    <property type="entry name" value="4FE4S_FER_1"/>
    <property type="match status" value="2"/>
</dbReference>
<dbReference type="PROSITE" id="PS51379">
    <property type="entry name" value="4FE4S_FER_2"/>
    <property type="match status" value="2"/>
</dbReference>
<organism>
    <name type="scientific">Methylobacillus flagellatus (strain ATCC 51484 / DSM 6875 / VKM B-1610 / KT)</name>
    <dbReference type="NCBI Taxonomy" id="265072"/>
    <lineage>
        <taxon>Bacteria</taxon>
        <taxon>Pseudomonadati</taxon>
        <taxon>Pseudomonadota</taxon>
        <taxon>Betaproteobacteria</taxon>
        <taxon>Nitrosomonadales</taxon>
        <taxon>Methylophilaceae</taxon>
        <taxon>Methylobacillus</taxon>
    </lineage>
</organism>
<gene>
    <name evidence="1" type="primary">nuoI</name>
    <name type="ordered locus">Mfla_2053</name>
</gene>
<proteinExistence type="inferred from homology"/>
<name>NUOI_METFK</name>
<feature type="chain" id="PRO_0000298511" description="NADH-quinone oxidoreductase subunit I">
    <location>
        <begin position="1"/>
        <end position="163"/>
    </location>
</feature>
<feature type="domain" description="4Fe-4S ferredoxin-type 1" evidence="1">
    <location>
        <begin position="54"/>
        <end position="84"/>
    </location>
</feature>
<feature type="domain" description="4Fe-4S ferredoxin-type 2" evidence="1">
    <location>
        <begin position="94"/>
        <end position="123"/>
    </location>
</feature>
<feature type="binding site" evidence="1">
    <location>
        <position position="64"/>
    </location>
    <ligand>
        <name>[4Fe-4S] cluster</name>
        <dbReference type="ChEBI" id="CHEBI:49883"/>
        <label>1</label>
    </ligand>
</feature>
<feature type="binding site" evidence="1">
    <location>
        <position position="67"/>
    </location>
    <ligand>
        <name>[4Fe-4S] cluster</name>
        <dbReference type="ChEBI" id="CHEBI:49883"/>
        <label>1</label>
    </ligand>
</feature>
<feature type="binding site" evidence="1">
    <location>
        <position position="70"/>
    </location>
    <ligand>
        <name>[4Fe-4S] cluster</name>
        <dbReference type="ChEBI" id="CHEBI:49883"/>
        <label>1</label>
    </ligand>
</feature>
<feature type="binding site" evidence="1">
    <location>
        <position position="74"/>
    </location>
    <ligand>
        <name>[4Fe-4S] cluster</name>
        <dbReference type="ChEBI" id="CHEBI:49883"/>
        <label>2</label>
    </ligand>
</feature>
<feature type="binding site" evidence="1">
    <location>
        <position position="103"/>
    </location>
    <ligand>
        <name>[4Fe-4S] cluster</name>
        <dbReference type="ChEBI" id="CHEBI:49883"/>
        <label>2</label>
    </ligand>
</feature>
<feature type="binding site" evidence="1">
    <location>
        <position position="106"/>
    </location>
    <ligand>
        <name>[4Fe-4S] cluster</name>
        <dbReference type="ChEBI" id="CHEBI:49883"/>
        <label>2</label>
    </ligand>
</feature>
<feature type="binding site" evidence="1">
    <location>
        <position position="109"/>
    </location>
    <ligand>
        <name>[4Fe-4S] cluster</name>
        <dbReference type="ChEBI" id="CHEBI:49883"/>
        <label>2</label>
    </ligand>
</feature>
<feature type="binding site" evidence="1">
    <location>
        <position position="113"/>
    </location>
    <ligand>
        <name>[4Fe-4S] cluster</name>
        <dbReference type="ChEBI" id="CHEBI:49883"/>
        <label>1</label>
    </ligand>
</feature>
<protein>
    <recommendedName>
        <fullName evidence="1">NADH-quinone oxidoreductase subunit I</fullName>
        <ecNumber evidence="1">7.1.1.-</ecNumber>
    </recommendedName>
    <alternativeName>
        <fullName evidence="1">NADH dehydrogenase I subunit I</fullName>
    </alternativeName>
    <alternativeName>
        <fullName evidence="1">NDH-1 subunit I</fullName>
    </alternativeName>
</protein>
<reference key="1">
    <citation type="submission" date="2006-03" db="EMBL/GenBank/DDBJ databases">
        <title>Complete sequence of Methylobacillus flagellatus KT.</title>
        <authorList>
            <consortium name="US DOE Joint Genome Institute"/>
            <person name="Copeland A."/>
            <person name="Lucas S."/>
            <person name="Lapidus A."/>
            <person name="Barry K."/>
            <person name="Detter J.C."/>
            <person name="Glavina del Rio T."/>
            <person name="Hammon N."/>
            <person name="Israni S."/>
            <person name="Dalin E."/>
            <person name="Tice H."/>
            <person name="Pitluck S."/>
            <person name="Brettin T."/>
            <person name="Bruce D."/>
            <person name="Han C."/>
            <person name="Tapia R."/>
            <person name="Saunders E."/>
            <person name="Gilna P."/>
            <person name="Schmutz J."/>
            <person name="Larimer F."/>
            <person name="Land M."/>
            <person name="Kyrpides N."/>
            <person name="Anderson I."/>
            <person name="Richardson P."/>
        </authorList>
    </citation>
    <scope>NUCLEOTIDE SEQUENCE [LARGE SCALE GENOMIC DNA]</scope>
    <source>
        <strain>ATCC 51484 / DSM 6875 / VKM B-1610 / KT</strain>
    </source>
</reference>
<keyword id="KW-0004">4Fe-4S</keyword>
<keyword id="KW-0997">Cell inner membrane</keyword>
<keyword id="KW-1003">Cell membrane</keyword>
<keyword id="KW-0408">Iron</keyword>
<keyword id="KW-0411">Iron-sulfur</keyword>
<keyword id="KW-0472">Membrane</keyword>
<keyword id="KW-0479">Metal-binding</keyword>
<keyword id="KW-0520">NAD</keyword>
<keyword id="KW-0874">Quinone</keyword>
<keyword id="KW-1185">Reference proteome</keyword>
<keyword id="KW-0677">Repeat</keyword>
<keyword id="KW-1278">Translocase</keyword>
<keyword id="KW-0830">Ubiquinone</keyword>
<accession>Q1GZL7</accession>
<evidence type="ECO:0000255" key="1">
    <source>
        <dbReference type="HAMAP-Rule" id="MF_01351"/>
    </source>
</evidence>
<sequence>MISKIKELFASFMLLELVKGMALTGRYFFARKVTVQFPEERTPISPRFRGLHALRRYPNGEERCIACKLCEAVCPAMAITIESEQREDNTRRTTRYDIDLTKCIFCGFCEESCPVDSIVETRIFDYHGEKRGDLIYTKPMLLAVGDKYEEQIAADRAADARYR</sequence>
<comment type="function">
    <text evidence="1">NDH-1 shuttles electrons from NADH, via FMN and iron-sulfur (Fe-S) centers, to quinones in the respiratory chain. The immediate electron acceptor for the enzyme in this species is believed to be ubiquinone. Couples the redox reaction to proton translocation (for every two electrons transferred, four hydrogen ions are translocated across the cytoplasmic membrane), and thus conserves the redox energy in a proton gradient.</text>
</comment>
<comment type="catalytic activity">
    <reaction evidence="1">
        <text>a quinone + NADH + 5 H(+)(in) = a quinol + NAD(+) + 4 H(+)(out)</text>
        <dbReference type="Rhea" id="RHEA:57888"/>
        <dbReference type="ChEBI" id="CHEBI:15378"/>
        <dbReference type="ChEBI" id="CHEBI:24646"/>
        <dbReference type="ChEBI" id="CHEBI:57540"/>
        <dbReference type="ChEBI" id="CHEBI:57945"/>
        <dbReference type="ChEBI" id="CHEBI:132124"/>
    </reaction>
</comment>
<comment type="cofactor">
    <cofactor evidence="1">
        <name>[4Fe-4S] cluster</name>
        <dbReference type="ChEBI" id="CHEBI:49883"/>
    </cofactor>
    <text evidence="1">Binds 2 [4Fe-4S] clusters per subunit.</text>
</comment>
<comment type="subunit">
    <text evidence="1">NDH-1 is composed of 14 different subunits. Subunits NuoA, H, J, K, L, M, N constitute the membrane sector of the complex.</text>
</comment>
<comment type="subcellular location">
    <subcellularLocation>
        <location evidence="1">Cell inner membrane</location>
        <topology evidence="1">Peripheral membrane protein</topology>
    </subcellularLocation>
</comment>
<comment type="similarity">
    <text evidence="1">Belongs to the complex I 23 kDa subunit family.</text>
</comment>